<feature type="chain" id="PRO_0000331108" description="SsrA-binding protein">
    <location>
        <begin position="1"/>
        <end position="147"/>
    </location>
</feature>
<organism>
    <name type="scientific">Thermosipho melanesiensis (strain DSM 12029 / CIP 104789 / BI429)</name>
    <dbReference type="NCBI Taxonomy" id="391009"/>
    <lineage>
        <taxon>Bacteria</taxon>
        <taxon>Thermotogati</taxon>
        <taxon>Thermotogota</taxon>
        <taxon>Thermotogae</taxon>
        <taxon>Thermotogales</taxon>
        <taxon>Fervidobacteriaceae</taxon>
        <taxon>Thermosipho</taxon>
    </lineage>
</organism>
<proteinExistence type="inferred from homology"/>
<evidence type="ECO:0000255" key="1">
    <source>
        <dbReference type="HAMAP-Rule" id="MF_00023"/>
    </source>
</evidence>
<dbReference type="EMBL" id="CP000716">
    <property type="protein sequence ID" value="ABR30118.1"/>
    <property type="molecule type" value="Genomic_DNA"/>
</dbReference>
<dbReference type="RefSeq" id="WP_012056479.1">
    <property type="nucleotide sequence ID" value="NC_009616.1"/>
</dbReference>
<dbReference type="SMR" id="A6LJL7"/>
<dbReference type="STRING" id="391009.Tmel_0244"/>
<dbReference type="KEGG" id="tme:Tmel_0244"/>
<dbReference type="eggNOG" id="COG0691">
    <property type="taxonomic scope" value="Bacteria"/>
</dbReference>
<dbReference type="HOGENOM" id="CLU_108953_0_0_0"/>
<dbReference type="OrthoDB" id="9805462at2"/>
<dbReference type="Proteomes" id="UP000001110">
    <property type="component" value="Chromosome"/>
</dbReference>
<dbReference type="GO" id="GO:0005829">
    <property type="term" value="C:cytosol"/>
    <property type="evidence" value="ECO:0007669"/>
    <property type="project" value="TreeGrafter"/>
</dbReference>
<dbReference type="GO" id="GO:0003723">
    <property type="term" value="F:RNA binding"/>
    <property type="evidence" value="ECO:0007669"/>
    <property type="project" value="UniProtKB-UniRule"/>
</dbReference>
<dbReference type="GO" id="GO:0070929">
    <property type="term" value="P:trans-translation"/>
    <property type="evidence" value="ECO:0007669"/>
    <property type="project" value="UniProtKB-UniRule"/>
</dbReference>
<dbReference type="CDD" id="cd09294">
    <property type="entry name" value="SmpB"/>
    <property type="match status" value="1"/>
</dbReference>
<dbReference type="Gene3D" id="2.40.280.10">
    <property type="match status" value="1"/>
</dbReference>
<dbReference type="HAMAP" id="MF_00023">
    <property type="entry name" value="SmpB"/>
    <property type="match status" value="1"/>
</dbReference>
<dbReference type="InterPro" id="IPR023620">
    <property type="entry name" value="SmpB"/>
</dbReference>
<dbReference type="InterPro" id="IPR000037">
    <property type="entry name" value="SsrA-bd_prot"/>
</dbReference>
<dbReference type="InterPro" id="IPR020081">
    <property type="entry name" value="SsrA-bd_prot_CS"/>
</dbReference>
<dbReference type="NCBIfam" id="NF003843">
    <property type="entry name" value="PRK05422.1"/>
    <property type="match status" value="1"/>
</dbReference>
<dbReference type="NCBIfam" id="TIGR00086">
    <property type="entry name" value="smpB"/>
    <property type="match status" value="1"/>
</dbReference>
<dbReference type="PANTHER" id="PTHR30308:SF2">
    <property type="entry name" value="SSRA-BINDING PROTEIN"/>
    <property type="match status" value="1"/>
</dbReference>
<dbReference type="PANTHER" id="PTHR30308">
    <property type="entry name" value="TMRNA-BINDING COMPONENT OF TRANS-TRANSLATION TAGGING COMPLEX"/>
    <property type="match status" value="1"/>
</dbReference>
<dbReference type="Pfam" id="PF01668">
    <property type="entry name" value="SmpB"/>
    <property type="match status" value="1"/>
</dbReference>
<dbReference type="SUPFAM" id="SSF74982">
    <property type="entry name" value="Small protein B (SmpB)"/>
    <property type="match status" value="1"/>
</dbReference>
<dbReference type="PROSITE" id="PS01317">
    <property type="entry name" value="SSRP"/>
    <property type="match status" value="1"/>
</dbReference>
<comment type="function">
    <text evidence="1">Required for rescue of stalled ribosomes mediated by trans-translation. Binds to transfer-messenger RNA (tmRNA), required for stable association of tmRNA with ribosomes. tmRNA and SmpB together mimic tRNA shape, replacing the anticodon stem-loop with SmpB. tmRNA is encoded by the ssrA gene; the 2 termini fold to resemble tRNA(Ala) and it encodes a 'tag peptide', a short internal open reading frame. During trans-translation Ala-aminoacylated tmRNA acts like a tRNA, entering the A-site of stalled ribosomes, displacing the stalled mRNA. The ribosome then switches to translate the ORF on the tmRNA; the nascent peptide is terminated with the 'tag peptide' encoded by the tmRNA and targeted for degradation. The ribosome is freed to recommence translation, which seems to be the essential function of trans-translation.</text>
</comment>
<comment type="subcellular location">
    <subcellularLocation>
        <location evidence="1">Cytoplasm</location>
    </subcellularLocation>
    <text evidence="1">The tmRNA-SmpB complex associates with stalled 70S ribosomes.</text>
</comment>
<comment type="similarity">
    <text evidence="1">Belongs to the SmpB family.</text>
</comment>
<gene>
    <name evidence="1" type="primary">smpB</name>
    <name type="ordered locus">Tmel_0244</name>
</gene>
<accession>A6LJL7</accession>
<sequence>MKIIATNKKAFSDYIILETYEAGIELRGTEVKSLRESGANFKDSFCRIKNGEVFLLNLNIPQYRNGSLNNHDPERPRRLLLHKKEIHRLLGKVKEQGLTIIPTKIYFNNRGLVKVEIAVAKGKKKYDKREDIKKREINRRIREYLKG</sequence>
<name>SSRP_THEM4</name>
<keyword id="KW-0963">Cytoplasm</keyword>
<keyword id="KW-0694">RNA-binding</keyword>
<protein>
    <recommendedName>
        <fullName evidence="1">SsrA-binding protein</fullName>
    </recommendedName>
    <alternativeName>
        <fullName evidence="1">Small protein B</fullName>
    </alternativeName>
</protein>
<reference key="1">
    <citation type="submission" date="2007-05" db="EMBL/GenBank/DDBJ databases">
        <title>Complete sequence of Thermosipho melanesiensis BI429.</title>
        <authorList>
            <consortium name="US DOE Joint Genome Institute"/>
            <person name="Copeland A."/>
            <person name="Lucas S."/>
            <person name="Lapidus A."/>
            <person name="Barry K."/>
            <person name="Glavina del Rio T."/>
            <person name="Dalin E."/>
            <person name="Tice H."/>
            <person name="Pitluck S."/>
            <person name="Chertkov O."/>
            <person name="Brettin T."/>
            <person name="Bruce D."/>
            <person name="Detter J.C."/>
            <person name="Han C."/>
            <person name="Schmutz J."/>
            <person name="Larimer F."/>
            <person name="Land M."/>
            <person name="Hauser L."/>
            <person name="Kyrpides N."/>
            <person name="Mikhailova N."/>
            <person name="Nelson K."/>
            <person name="Gogarten J.P."/>
            <person name="Noll K."/>
            <person name="Richardson P."/>
        </authorList>
    </citation>
    <scope>NUCLEOTIDE SEQUENCE [LARGE SCALE GENOMIC DNA]</scope>
    <source>
        <strain>DSM 12029 / CIP 104789 / BI429</strain>
    </source>
</reference>